<name>RS13_SULNB</name>
<gene>
    <name evidence="1" type="primary">rpsM</name>
    <name type="ordered locus">SUN_2344</name>
</gene>
<dbReference type="EMBL" id="AP009179">
    <property type="protein sequence ID" value="BAF73280.1"/>
    <property type="molecule type" value="Genomic_DNA"/>
</dbReference>
<dbReference type="RefSeq" id="WP_012084119.1">
    <property type="nucleotide sequence ID" value="NC_009663.1"/>
</dbReference>
<dbReference type="SMR" id="A6QCS1"/>
<dbReference type="STRING" id="387093.SUN_2344"/>
<dbReference type="KEGG" id="sun:SUN_2344"/>
<dbReference type="eggNOG" id="COG0099">
    <property type="taxonomic scope" value="Bacteria"/>
</dbReference>
<dbReference type="HOGENOM" id="CLU_103849_1_2_7"/>
<dbReference type="OrthoDB" id="9803610at2"/>
<dbReference type="Proteomes" id="UP000006378">
    <property type="component" value="Chromosome"/>
</dbReference>
<dbReference type="GO" id="GO:0005829">
    <property type="term" value="C:cytosol"/>
    <property type="evidence" value="ECO:0007669"/>
    <property type="project" value="TreeGrafter"/>
</dbReference>
<dbReference type="GO" id="GO:0015935">
    <property type="term" value="C:small ribosomal subunit"/>
    <property type="evidence" value="ECO:0007669"/>
    <property type="project" value="TreeGrafter"/>
</dbReference>
<dbReference type="GO" id="GO:0019843">
    <property type="term" value="F:rRNA binding"/>
    <property type="evidence" value="ECO:0007669"/>
    <property type="project" value="UniProtKB-UniRule"/>
</dbReference>
<dbReference type="GO" id="GO:0003735">
    <property type="term" value="F:structural constituent of ribosome"/>
    <property type="evidence" value="ECO:0007669"/>
    <property type="project" value="InterPro"/>
</dbReference>
<dbReference type="GO" id="GO:0000049">
    <property type="term" value="F:tRNA binding"/>
    <property type="evidence" value="ECO:0007669"/>
    <property type="project" value="UniProtKB-UniRule"/>
</dbReference>
<dbReference type="GO" id="GO:0006412">
    <property type="term" value="P:translation"/>
    <property type="evidence" value="ECO:0007669"/>
    <property type="project" value="UniProtKB-UniRule"/>
</dbReference>
<dbReference type="FunFam" id="1.10.8.50:FF:000001">
    <property type="entry name" value="30S ribosomal protein S13"/>
    <property type="match status" value="1"/>
</dbReference>
<dbReference type="FunFam" id="4.10.910.10:FF:000001">
    <property type="entry name" value="30S ribosomal protein S13"/>
    <property type="match status" value="1"/>
</dbReference>
<dbReference type="Gene3D" id="1.10.8.50">
    <property type="match status" value="1"/>
</dbReference>
<dbReference type="Gene3D" id="4.10.910.10">
    <property type="entry name" value="30s ribosomal protein s13, domain 2"/>
    <property type="match status" value="1"/>
</dbReference>
<dbReference type="HAMAP" id="MF_01315">
    <property type="entry name" value="Ribosomal_uS13"/>
    <property type="match status" value="1"/>
</dbReference>
<dbReference type="InterPro" id="IPR027437">
    <property type="entry name" value="Rbsml_uS13_C"/>
</dbReference>
<dbReference type="InterPro" id="IPR001892">
    <property type="entry name" value="Ribosomal_uS13"/>
</dbReference>
<dbReference type="InterPro" id="IPR010979">
    <property type="entry name" value="Ribosomal_uS13-like_H2TH"/>
</dbReference>
<dbReference type="InterPro" id="IPR019980">
    <property type="entry name" value="Ribosomal_uS13_bac-type"/>
</dbReference>
<dbReference type="InterPro" id="IPR018269">
    <property type="entry name" value="Ribosomal_uS13_CS"/>
</dbReference>
<dbReference type="NCBIfam" id="TIGR03631">
    <property type="entry name" value="uS13_bact"/>
    <property type="match status" value="1"/>
</dbReference>
<dbReference type="PANTHER" id="PTHR10871">
    <property type="entry name" value="30S RIBOSOMAL PROTEIN S13/40S RIBOSOMAL PROTEIN S18"/>
    <property type="match status" value="1"/>
</dbReference>
<dbReference type="PANTHER" id="PTHR10871:SF1">
    <property type="entry name" value="SMALL RIBOSOMAL SUBUNIT PROTEIN US13M"/>
    <property type="match status" value="1"/>
</dbReference>
<dbReference type="Pfam" id="PF00416">
    <property type="entry name" value="Ribosomal_S13"/>
    <property type="match status" value="1"/>
</dbReference>
<dbReference type="PIRSF" id="PIRSF002134">
    <property type="entry name" value="Ribosomal_S13"/>
    <property type="match status" value="1"/>
</dbReference>
<dbReference type="SUPFAM" id="SSF46946">
    <property type="entry name" value="S13-like H2TH domain"/>
    <property type="match status" value="1"/>
</dbReference>
<dbReference type="PROSITE" id="PS00646">
    <property type="entry name" value="RIBOSOMAL_S13_1"/>
    <property type="match status" value="1"/>
</dbReference>
<dbReference type="PROSITE" id="PS50159">
    <property type="entry name" value="RIBOSOMAL_S13_2"/>
    <property type="match status" value="1"/>
</dbReference>
<evidence type="ECO:0000255" key="1">
    <source>
        <dbReference type="HAMAP-Rule" id="MF_01315"/>
    </source>
</evidence>
<evidence type="ECO:0000256" key="2">
    <source>
        <dbReference type="SAM" id="MobiDB-lite"/>
    </source>
</evidence>
<evidence type="ECO:0000305" key="3"/>
<accession>A6QCS1</accession>
<comment type="function">
    <text evidence="1">Located at the top of the head of the 30S subunit, it contacts several helices of the 16S rRNA. In the 70S ribosome it contacts the 23S rRNA (bridge B1a) and protein L5 of the 50S subunit (bridge B1b), connecting the 2 subunits; these bridges are implicated in subunit movement. Contacts the tRNAs in the A and P-sites.</text>
</comment>
<comment type="subunit">
    <text evidence="1">Part of the 30S ribosomal subunit. Forms a loose heterodimer with protein S19. Forms two bridges to the 50S subunit in the 70S ribosome.</text>
</comment>
<comment type="similarity">
    <text evidence="1">Belongs to the universal ribosomal protein uS13 family.</text>
</comment>
<feature type="chain" id="PRO_0000306727" description="Small ribosomal subunit protein uS13">
    <location>
        <begin position="1"/>
        <end position="120"/>
    </location>
</feature>
<feature type="region of interest" description="Disordered" evidence="2">
    <location>
        <begin position="93"/>
        <end position="120"/>
    </location>
</feature>
<keyword id="KW-0687">Ribonucleoprotein</keyword>
<keyword id="KW-0689">Ribosomal protein</keyword>
<keyword id="KW-0694">RNA-binding</keyword>
<keyword id="KW-0699">rRNA-binding</keyword>
<keyword id="KW-0820">tRNA-binding</keyword>
<reference key="1">
    <citation type="journal article" date="2007" name="Proc. Natl. Acad. Sci. U.S.A.">
        <title>Deep-sea vent epsilon-proteobacterial genomes provide insights into emergence of pathogens.</title>
        <authorList>
            <person name="Nakagawa S."/>
            <person name="Takaki Y."/>
            <person name="Shimamura S."/>
            <person name="Reysenbach A.-L."/>
            <person name="Takai K."/>
            <person name="Horikoshi K."/>
        </authorList>
    </citation>
    <scope>NUCLEOTIDE SEQUENCE [LARGE SCALE GENOMIC DNA]</scope>
    <source>
        <strain>NBC37-1</strain>
    </source>
</reference>
<sequence>MARIAGVDLPQKKRIEYALTYIYGIGLTTSRKILDRTGIDYNTRVHELTDAQAATIRNDIQENVMVEGDLRKKVTLDIKALMDLGSYRGLRHRRGLPCRGQKTKTNARTRKGKRKTVGAA</sequence>
<organism>
    <name type="scientific">Sulfurovum sp. (strain NBC37-1)</name>
    <dbReference type="NCBI Taxonomy" id="387093"/>
    <lineage>
        <taxon>Bacteria</taxon>
        <taxon>Pseudomonadati</taxon>
        <taxon>Campylobacterota</taxon>
        <taxon>Epsilonproteobacteria</taxon>
        <taxon>Campylobacterales</taxon>
        <taxon>Sulfurovaceae</taxon>
        <taxon>Sulfurovum</taxon>
    </lineage>
</organism>
<proteinExistence type="inferred from homology"/>
<protein>
    <recommendedName>
        <fullName evidence="1">Small ribosomal subunit protein uS13</fullName>
    </recommendedName>
    <alternativeName>
        <fullName evidence="3">30S ribosomal protein S13</fullName>
    </alternativeName>
</protein>